<keyword id="KW-0175">Coiled coil</keyword>
<keyword id="KW-1185">Reference proteome</keyword>
<keyword id="KW-0964">Secreted</keyword>
<keyword id="KW-0843">Virulence</keyword>
<organism>
    <name type="scientific">Burkholderia pseudomallei (strain K96243)</name>
    <dbReference type="NCBI Taxonomy" id="272560"/>
    <lineage>
        <taxon>Bacteria</taxon>
        <taxon>Pseudomonadati</taxon>
        <taxon>Pseudomonadota</taxon>
        <taxon>Betaproteobacteria</taxon>
        <taxon>Burkholderiales</taxon>
        <taxon>Burkholderiaceae</taxon>
        <taxon>Burkholderia</taxon>
        <taxon>pseudomallei group</taxon>
    </lineage>
</organism>
<reference key="1">
    <citation type="journal article" date="2004" name="Proc. Natl. Acad. Sci. U.S.A.">
        <title>Genomic plasticity of the causative agent of melioidosis, Burkholderia pseudomallei.</title>
        <authorList>
            <person name="Holden M.T.G."/>
            <person name="Titball R.W."/>
            <person name="Peacock S.J."/>
            <person name="Cerdeno-Tarraga A.-M."/>
            <person name="Atkins T."/>
            <person name="Crossman L.C."/>
            <person name="Pitt T."/>
            <person name="Churcher C."/>
            <person name="Mungall K.L."/>
            <person name="Bentley S.D."/>
            <person name="Sebaihia M."/>
            <person name="Thomson N.R."/>
            <person name="Bason N."/>
            <person name="Beacham I.R."/>
            <person name="Brooks K."/>
            <person name="Brown K.A."/>
            <person name="Brown N.F."/>
            <person name="Challis G.L."/>
            <person name="Cherevach I."/>
            <person name="Chillingworth T."/>
            <person name="Cronin A."/>
            <person name="Crossett B."/>
            <person name="Davis P."/>
            <person name="DeShazer D."/>
            <person name="Feltwell T."/>
            <person name="Fraser A."/>
            <person name="Hance Z."/>
            <person name="Hauser H."/>
            <person name="Holroyd S."/>
            <person name="Jagels K."/>
            <person name="Keith K.E."/>
            <person name="Maddison M."/>
            <person name="Moule S."/>
            <person name="Price C."/>
            <person name="Quail M.A."/>
            <person name="Rabbinowitsch E."/>
            <person name="Rutherford K."/>
            <person name="Sanders M."/>
            <person name="Simmonds M."/>
            <person name="Songsivilai S."/>
            <person name="Stevens K."/>
            <person name="Tumapa S."/>
            <person name="Vesaratchavest M."/>
            <person name="Whitehead S."/>
            <person name="Yeats C."/>
            <person name="Barrell B.G."/>
            <person name="Oyston P.C.F."/>
            <person name="Parkhill J."/>
        </authorList>
    </citation>
    <scope>NUCLEOTIDE SEQUENCE [LARGE SCALE GENOMIC DNA]</scope>
    <source>
        <strain>K96243</strain>
    </source>
</reference>
<reference key="2">
    <citation type="journal article" date="2004" name="Microbiology">
        <title>Attenuated virulence and protective efficacy of a Burkholderia pseudomallei bsa type III secretion mutant in murine models of melioidosis.</title>
        <authorList>
            <person name="Stevens M.P."/>
            <person name="Haque A."/>
            <person name="Atkins T."/>
            <person name="Hill J."/>
            <person name="Wood M.W."/>
            <person name="Easton A."/>
            <person name="Nelson M."/>
            <person name="Underwood-Fowler C."/>
            <person name="Titball R.W."/>
            <person name="Bancroft G.J."/>
            <person name="Galyov E.E."/>
        </authorList>
    </citation>
    <scope>ROLE IN VIRULENCE</scope>
    <scope>SUBCELLULAR LOCATION</scope>
    <source>
        <strain>576</strain>
    </source>
</reference>
<reference key="3">
    <citation type="journal article" date="2008" name="Autophagy">
        <title>Stimulation of autophagy suppresses the intracellular survival of Burkholderia pseudomallei in mammalian cell lines.</title>
        <authorList>
            <person name="Cullinane M."/>
            <person name="Gong L."/>
            <person name="Li X."/>
            <person name="Lazar-Adler N."/>
            <person name="Tra T."/>
            <person name="Wolvetang E."/>
            <person name="Prescott M."/>
            <person name="Boyce J.D."/>
            <person name="Devenish R.J."/>
            <person name="Adler B."/>
        </authorList>
    </citation>
    <scope>ROLE IN EVADING HOST AUTOPHAGIC PATHWAY</scope>
</reference>
<evidence type="ECO:0000255" key="1"/>
<evidence type="ECO:0000269" key="2">
    <source>
    </source>
</evidence>
<evidence type="ECO:0000269" key="3">
    <source>
    </source>
</evidence>
<evidence type="ECO:0000305" key="4"/>
<proteinExistence type="inferred from homology"/>
<accession>Q63K42</accession>
<name>BOPA_BURPS</name>
<comment type="function">
    <text evidence="2 3">Plays a role in mediating bacterial evasion from the host autophagic pathway.</text>
</comment>
<comment type="subcellular location">
    <subcellularLocation>
        <location evidence="2">Secreted</location>
    </subcellularLocation>
    <text>Secreted via the bsa type III secretion system.</text>
</comment>
<comment type="similarity">
    <text evidence="4">Belongs to the BopA/IcsB family.</text>
</comment>
<dbReference type="EMBL" id="BX571966">
    <property type="protein sequence ID" value="CAH38997.1"/>
    <property type="molecule type" value="Genomic_DNA"/>
</dbReference>
<dbReference type="RefSeq" id="WP_004528810.1">
    <property type="nucleotide sequence ID" value="NZ_CP009537.1"/>
</dbReference>
<dbReference type="RefSeq" id="YP_111530.1">
    <property type="nucleotide sequence ID" value="NC_006351.1"/>
</dbReference>
<dbReference type="STRING" id="272560.BPSS1524"/>
<dbReference type="KEGG" id="bps:BPSS1524"/>
<dbReference type="PATRIC" id="fig|272560.51.peg.4878"/>
<dbReference type="eggNOG" id="ENOG5032XT2">
    <property type="taxonomic scope" value="Bacteria"/>
</dbReference>
<dbReference type="Proteomes" id="UP000000605">
    <property type="component" value="Chromosome 2"/>
</dbReference>
<dbReference type="GO" id="GO:0005615">
    <property type="term" value="C:extracellular space"/>
    <property type="evidence" value="ECO:0007669"/>
    <property type="project" value="InterPro"/>
</dbReference>
<dbReference type="Gene3D" id="4.10.1330.10">
    <property type="entry name" value="non globular Virulence effector SptP domain"/>
    <property type="match status" value="1"/>
</dbReference>
<dbReference type="InterPro" id="IPR011070">
    <property type="entry name" value="Globular_prot_asu/bsu"/>
</dbReference>
<dbReference type="InterPro" id="IPR015203">
    <property type="entry name" value="SptP_N"/>
</dbReference>
<dbReference type="InterPro" id="IPR044899">
    <property type="entry name" value="SptP_N_sf"/>
</dbReference>
<dbReference type="Pfam" id="PF09119">
    <property type="entry name" value="SicP-binding"/>
    <property type="match status" value="1"/>
</dbReference>
<dbReference type="SUPFAM" id="SSF56568">
    <property type="entry name" value="Non-globular alpha+beta subunits of globular proteins"/>
    <property type="match status" value="1"/>
</dbReference>
<feature type="chain" id="PRO_0000344022" description="Effector protein BopA">
    <location>
        <begin position="1"/>
        <end position="512"/>
    </location>
</feature>
<feature type="coiled-coil region" evidence="1">
    <location>
        <begin position="347"/>
        <end position="377"/>
    </location>
</feature>
<sequence>MINVDAFVASARSGARVVVGGDARGPVVSAARLGMKERLFAFLAHVPLLKHCDAVRRYAEQVRMENRRSLEVFVLALSKRYGPEGAKAAFDYGARRDGAPLDQRRVRNMVSIAEHFHGTGDAKPLARQMVFRSWECRGLDHPGHASLTIKNQADADAGRHVYEHVSWWPNQRLGSKEHFDRIEPKTLDGYRIDKRSEISSATEQRLREGDAARRKILADGFKYANQDERHDARFFPRAGQKLDKDAEWGLSARKVYFPAIGFNHDRRDTDRPRAFVLFGLNEAAMLRDARTVKEGAKSGELMYQMISKKENCASMALRVLRAGGAEHFVPYTAAWISEDPNHAHAYALAVQARIDALNQRRADVERRCERLRDSASVRQAWRAFSEAGGASASPLAEDAGRGRASAHMRQARLDEHAREVERIGAYFAELSAGRSGKHRDRADAALADAMKRCAPSARDDVAALTRKASVLVETLGRHLDAPPPSDSSALRRLAAHAMIGRIEAFMAAAIAA</sequence>
<gene>
    <name type="primary">bopA</name>
    <name type="ordered locus">BPSS1524</name>
</gene>
<protein>
    <recommendedName>
        <fullName>Effector protein BopA</fullName>
    </recommendedName>
</protein>